<accession>O34469</accession>
<accession>Q7BVR1</accession>
<reference key="1">
    <citation type="submission" date="1997-07" db="EMBL/GenBank/DDBJ databases">
        <title>The 55-58 degree segment of the Bacillus subtilis chromosome, a region spanning from the purA gene cluster to the cotJ operon.</title>
        <authorList>
            <person name="Borriss R."/>
            <person name="Schroeter R."/>
        </authorList>
    </citation>
    <scope>NUCLEOTIDE SEQUENCE [GENOMIC DNA]</scope>
    <source>
        <strain>168</strain>
    </source>
</reference>
<reference key="2">
    <citation type="journal article" date="1997" name="Nature">
        <title>The complete genome sequence of the Gram-positive bacterium Bacillus subtilis.</title>
        <authorList>
            <person name="Kunst F."/>
            <person name="Ogasawara N."/>
            <person name="Moszer I."/>
            <person name="Albertini A.M."/>
            <person name="Alloni G."/>
            <person name="Azevedo V."/>
            <person name="Bertero M.G."/>
            <person name="Bessieres P."/>
            <person name="Bolotin A."/>
            <person name="Borchert S."/>
            <person name="Borriss R."/>
            <person name="Boursier L."/>
            <person name="Brans A."/>
            <person name="Braun M."/>
            <person name="Brignell S.C."/>
            <person name="Bron S."/>
            <person name="Brouillet S."/>
            <person name="Bruschi C.V."/>
            <person name="Caldwell B."/>
            <person name="Capuano V."/>
            <person name="Carter N.M."/>
            <person name="Choi S.-K."/>
            <person name="Codani J.-J."/>
            <person name="Connerton I.F."/>
            <person name="Cummings N.J."/>
            <person name="Daniel R.A."/>
            <person name="Denizot F."/>
            <person name="Devine K.M."/>
            <person name="Duesterhoeft A."/>
            <person name="Ehrlich S.D."/>
            <person name="Emmerson P.T."/>
            <person name="Entian K.-D."/>
            <person name="Errington J."/>
            <person name="Fabret C."/>
            <person name="Ferrari E."/>
            <person name="Foulger D."/>
            <person name="Fritz C."/>
            <person name="Fujita M."/>
            <person name="Fujita Y."/>
            <person name="Fuma S."/>
            <person name="Galizzi A."/>
            <person name="Galleron N."/>
            <person name="Ghim S.-Y."/>
            <person name="Glaser P."/>
            <person name="Goffeau A."/>
            <person name="Golightly E.J."/>
            <person name="Grandi G."/>
            <person name="Guiseppi G."/>
            <person name="Guy B.J."/>
            <person name="Haga K."/>
            <person name="Haiech J."/>
            <person name="Harwood C.R."/>
            <person name="Henaut A."/>
            <person name="Hilbert H."/>
            <person name="Holsappel S."/>
            <person name="Hosono S."/>
            <person name="Hullo M.-F."/>
            <person name="Itaya M."/>
            <person name="Jones L.-M."/>
            <person name="Joris B."/>
            <person name="Karamata D."/>
            <person name="Kasahara Y."/>
            <person name="Klaerr-Blanchard M."/>
            <person name="Klein C."/>
            <person name="Kobayashi Y."/>
            <person name="Koetter P."/>
            <person name="Koningstein G."/>
            <person name="Krogh S."/>
            <person name="Kumano M."/>
            <person name="Kurita K."/>
            <person name="Lapidus A."/>
            <person name="Lardinois S."/>
            <person name="Lauber J."/>
            <person name="Lazarevic V."/>
            <person name="Lee S.-M."/>
            <person name="Levine A."/>
            <person name="Liu H."/>
            <person name="Masuda S."/>
            <person name="Mauel C."/>
            <person name="Medigue C."/>
            <person name="Medina N."/>
            <person name="Mellado R.P."/>
            <person name="Mizuno M."/>
            <person name="Moestl D."/>
            <person name="Nakai S."/>
            <person name="Noback M."/>
            <person name="Noone D."/>
            <person name="O'Reilly M."/>
            <person name="Ogawa K."/>
            <person name="Ogiwara A."/>
            <person name="Oudega B."/>
            <person name="Park S.-H."/>
            <person name="Parro V."/>
            <person name="Pohl T.M."/>
            <person name="Portetelle D."/>
            <person name="Porwollik S."/>
            <person name="Prescott A.M."/>
            <person name="Presecan E."/>
            <person name="Pujic P."/>
            <person name="Purnelle B."/>
            <person name="Rapoport G."/>
            <person name="Rey M."/>
            <person name="Reynolds S."/>
            <person name="Rieger M."/>
            <person name="Rivolta C."/>
            <person name="Rocha E."/>
            <person name="Roche B."/>
            <person name="Rose M."/>
            <person name="Sadaie Y."/>
            <person name="Sato T."/>
            <person name="Scanlan E."/>
            <person name="Schleich S."/>
            <person name="Schroeter R."/>
            <person name="Scoffone F."/>
            <person name="Sekiguchi J."/>
            <person name="Sekowska A."/>
            <person name="Seror S.J."/>
            <person name="Serror P."/>
            <person name="Shin B.-S."/>
            <person name="Soldo B."/>
            <person name="Sorokin A."/>
            <person name="Tacconi E."/>
            <person name="Takagi T."/>
            <person name="Takahashi H."/>
            <person name="Takemaru K."/>
            <person name="Takeuchi M."/>
            <person name="Tamakoshi A."/>
            <person name="Tanaka T."/>
            <person name="Terpstra P."/>
            <person name="Tognoni A."/>
            <person name="Tosato V."/>
            <person name="Uchiyama S."/>
            <person name="Vandenbol M."/>
            <person name="Vannier F."/>
            <person name="Vassarotti A."/>
            <person name="Viari A."/>
            <person name="Wambutt R."/>
            <person name="Wedler E."/>
            <person name="Wedler H."/>
            <person name="Weitzenegger T."/>
            <person name="Winters P."/>
            <person name="Wipat A."/>
            <person name="Yamamoto H."/>
            <person name="Yamane K."/>
            <person name="Yasumoto K."/>
            <person name="Yata K."/>
            <person name="Yoshida K."/>
            <person name="Yoshikawa H.-F."/>
            <person name="Zumstein E."/>
            <person name="Yoshikawa H."/>
            <person name="Danchin A."/>
        </authorList>
    </citation>
    <scope>NUCLEOTIDE SEQUENCE [LARGE SCALE GENOMIC DNA]</scope>
    <source>
        <strain>168</strain>
    </source>
</reference>
<reference key="3">
    <citation type="journal article" date="2009" name="Microbiology">
        <title>From a consortium sequence to a unified sequence: the Bacillus subtilis 168 reference genome a decade later.</title>
        <authorList>
            <person name="Barbe V."/>
            <person name="Cruveiller S."/>
            <person name="Kunst F."/>
            <person name="Lenoble P."/>
            <person name="Meurice G."/>
            <person name="Sekowska A."/>
            <person name="Vallenet D."/>
            <person name="Wang T."/>
            <person name="Moszer I."/>
            <person name="Medigue C."/>
            <person name="Danchin A."/>
        </authorList>
    </citation>
    <scope>SEQUENCE REVISION TO 232 AND 467-474</scope>
</reference>
<proteinExistence type="inferred from homology"/>
<feature type="chain" id="PRO_0000360865" description="Putative ATP-dependent helicase YeeB">
    <location>
        <begin position="1"/>
        <end position="599"/>
    </location>
</feature>
<feature type="domain" description="Helicase ATP-binding">
    <location>
        <begin position="30"/>
        <end position="207"/>
    </location>
</feature>
<feature type="domain" description="Helicase C-terminal">
    <location>
        <begin position="236"/>
        <end position="408"/>
    </location>
</feature>
<feature type="short sequence motif" description="DEAH box">
    <location>
        <begin position="154"/>
        <end position="157"/>
    </location>
</feature>
<feature type="binding site" evidence="1">
    <location>
        <begin position="43"/>
        <end position="50"/>
    </location>
    <ligand>
        <name>ATP</name>
        <dbReference type="ChEBI" id="CHEBI:30616"/>
    </ligand>
</feature>
<feature type="sequence conflict" description="In Ref. 1; AAB66475." evidence="2" ref="1">
    <original>F</original>
    <variation>I</variation>
    <location>
        <position position="232"/>
    </location>
</feature>
<feature type="sequence conflict" description="In Ref. 1; AAB66475." evidence="2" ref="1">
    <original>IMQDSQVQ</original>
    <variation>TCKIHKS</variation>
    <location>
        <begin position="467"/>
        <end position="474"/>
    </location>
</feature>
<gene>
    <name type="primary">yeeB</name>
    <name type="ordered locus">BSU06770</name>
</gene>
<comment type="similarity">
    <text evidence="2">Belongs to the helicase family.</text>
</comment>
<sequence>MENIIEINYNQTGKSKKTNEYGMREMQARAFEKRNSQYLLVKAPPASGKSRALMFIGLDKLINQGLRKVIVAVPERSIGSSFKNTDLKSYGFFENWKVDPRNNLTVGGDNSKVKSFVRFMESDDQVLICTHSTLRFAFEKIDDKAFDNCLLAIDEFHHVSADVNSRLGELLRSIIHNSSAHIVAMTGSYFRGDSVPILLPEDEELFDKVTYSYYEQLDGYEYLKGFGIGYHFYQGQYTSAINEVLDTNKKTIVHIPNVNSGESTKDKYDEVGKILDMIGEVEYQDDDTGIIYVKRHSDGKTLKIADLVDDQVGRENVVAYLRNIEALDDLDIIIALGMAKEGFDWPFCEHTLTVGYRGSLTEIVQIIGRCTRDSYNKTYAQFTNLIAMPDAKDEVVTYTVNTMLKAISASLLMEQVLTPDFKFKRRRNESEKSSTTGELFVKGLKEPSTENVKKIIENDINDLKAKIMQDSQVQKTFSGEVDPKVLNKVLIPKVIQKVYPNLSDEEIEEVRQHVVLDTVMKGAKSEVVGSKEFIRMADKFINIEDLDINLIDSINPFQKAFEVLSKELNSPVLKLIQETIDAKRINFDEDELVFIWPKV</sequence>
<dbReference type="EC" id="3.6.4.-"/>
<dbReference type="EMBL" id="AF012532">
    <property type="protein sequence ID" value="AAB66475.1"/>
    <property type="molecule type" value="Genomic_DNA"/>
</dbReference>
<dbReference type="EMBL" id="AL009126">
    <property type="protein sequence ID" value="CAB12497.2"/>
    <property type="molecule type" value="Genomic_DNA"/>
</dbReference>
<dbReference type="PIR" id="F69792">
    <property type="entry name" value="F69792"/>
</dbReference>
<dbReference type="RefSeq" id="NP_388559.2">
    <property type="nucleotide sequence ID" value="NC_000964.3"/>
</dbReference>
<dbReference type="RefSeq" id="WP_003233883.1">
    <property type="nucleotide sequence ID" value="NZ_OZ025638.1"/>
</dbReference>
<dbReference type="FunCoup" id="O34469">
    <property type="interactions" value="41"/>
</dbReference>
<dbReference type="STRING" id="224308.BSU06770"/>
<dbReference type="PaxDb" id="224308-BSU06770"/>
<dbReference type="EnsemblBacteria" id="CAB12497">
    <property type="protein sequence ID" value="CAB12497"/>
    <property type="gene ID" value="BSU_06770"/>
</dbReference>
<dbReference type="GeneID" id="936068"/>
<dbReference type="KEGG" id="bsu:BSU06770"/>
<dbReference type="PATRIC" id="fig|224308.179.peg.735"/>
<dbReference type="eggNOG" id="COG1061">
    <property type="taxonomic scope" value="Bacteria"/>
</dbReference>
<dbReference type="InParanoid" id="O34469"/>
<dbReference type="OrthoDB" id="9803860at2"/>
<dbReference type="BioCyc" id="BSUB:BSU06770-MONOMER"/>
<dbReference type="Proteomes" id="UP000001570">
    <property type="component" value="Chromosome"/>
</dbReference>
<dbReference type="GO" id="GO:0005524">
    <property type="term" value="F:ATP binding"/>
    <property type="evidence" value="ECO:0007669"/>
    <property type="project" value="UniProtKB-KW"/>
</dbReference>
<dbReference type="GO" id="GO:0004386">
    <property type="term" value="F:helicase activity"/>
    <property type="evidence" value="ECO:0007669"/>
    <property type="project" value="UniProtKB-KW"/>
</dbReference>
<dbReference type="GO" id="GO:0016787">
    <property type="term" value="F:hydrolase activity"/>
    <property type="evidence" value="ECO:0007669"/>
    <property type="project" value="UniProtKB-KW"/>
</dbReference>
<dbReference type="GO" id="GO:0003676">
    <property type="term" value="F:nucleic acid binding"/>
    <property type="evidence" value="ECO:0007669"/>
    <property type="project" value="InterPro"/>
</dbReference>
<dbReference type="Gene3D" id="3.40.50.300">
    <property type="entry name" value="P-loop containing nucleotide triphosphate hydrolases"/>
    <property type="match status" value="2"/>
</dbReference>
<dbReference type="InterPro" id="IPR011545">
    <property type="entry name" value="DEAD/DEAH_box_helicase_dom"/>
</dbReference>
<dbReference type="InterPro" id="IPR014001">
    <property type="entry name" value="Helicase_ATP-bd"/>
</dbReference>
<dbReference type="InterPro" id="IPR027417">
    <property type="entry name" value="P-loop_NTPase"/>
</dbReference>
<dbReference type="Pfam" id="PF00270">
    <property type="entry name" value="DEAD"/>
    <property type="match status" value="1"/>
</dbReference>
<dbReference type="SMART" id="SM00487">
    <property type="entry name" value="DEXDc"/>
    <property type="match status" value="1"/>
</dbReference>
<dbReference type="SUPFAM" id="SSF52540">
    <property type="entry name" value="P-loop containing nucleoside triphosphate hydrolases"/>
    <property type="match status" value="1"/>
</dbReference>
<organism>
    <name type="scientific">Bacillus subtilis (strain 168)</name>
    <dbReference type="NCBI Taxonomy" id="224308"/>
    <lineage>
        <taxon>Bacteria</taxon>
        <taxon>Bacillati</taxon>
        <taxon>Bacillota</taxon>
        <taxon>Bacilli</taxon>
        <taxon>Bacillales</taxon>
        <taxon>Bacillaceae</taxon>
        <taxon>Bacillus</taxon>
    </lineage>
</organism>
<evidence type="ECO:0000250" key="1"/>
<evidence type="ECO:0000305" key="2"/>
<name>YEEB_BACSU</name>
<keyword id="KW-0067">ATP-binding</keyword>
<keyword id="KW-0347">Helicase</keyword>
<keyword id="KW-0378">Hydrolase</keyword>
<keyword id="KW-0547">Nucleotide-binding</keyword>
<keyword id="KW-1185">Reference proteome</keyword>
<protein>
    <recommendedName>
        <fullName>Putative ATP-dependent helicase YeeB</fullName>
        <ecNumber>3.6.4.-</ecNumber>
    </recommendedName>
</protein>